<proteinExistence type="evidence at protein level"/>
<keyword id="KW-0175">Coiled coil</keyword>
<keyword id="KW-0963">Cytoplasm</keyword>
<keyword id="KW-0479">Metal-binding</keyword>
<keyword id="KW-0539">Nucleus</keyword>
<keyword id="KW-0597">Phosphoprotein</keyword>
<keyword id="KW-1185">Reference proteome</keyword>
<keyword id="KW-0677">Repeat</keyword>
<keyword id="KW-0862">Zinc</keyword>
<keyword id="KW-0863">Zinc-finger</keyword>
<accession>Q6U6G5</accession>
<comment type="function">
    <text evidence="2">Protects DRG1 from proteolytic degradation. Stimulates DRG1 GTPase activity likely by increasing the affinity for the potassium ions.</text>
</comment>
<comment type="subunit">
    <text evidence="2">Interacts with DRG1; the interaction forms a polysomal DRG1-DFRP1/ZC3H15 complex which provides protein stability to DRG1 possibly by blocking poly-ubiquitination. Associates with microtubules.</text>
</comment>
<comment type="subcellular location">
    <subcellularLocation>
        <location evidence="6">Cytoplasm</location>
    </subcellularLocation>
    <subcellularLocation>
        <location evidence="6">Nucleus</location>
    </subcellularLocation>
    <text evidence="1">The DRG1-DFRP2/ZC3H15 complex associates with polysomes.</text>
</comment>
<comment type="tissue specificity">
    <text evidence="6">Ubiquitously expressed.</text>
</comment>
<comment type="induction">
    <text evidence="6">By NGF in neuronal cells.</text>
</comment>
<comment type="similarity">
    <text evidence="7">Belongs to the ZC3H15/TMA46 family.</text>
</comment>
<feature type="chain" id="PRO_0000324644" description="Zinc finger CCCH domain-containing protein 15">
    <location>
        <begin position="1"/>
        <end position="426"/>
    </location>
</feature>
<feature type="zinc finger region" description="C3H1-type 1" evidence="4">
    <location>
        <begin position="99"/>
        <end position="126"/>
    </location>
</feature>
<feature type="zinc finger region" description="C3H1-type 2" evidence="4">
    <location>
        <begin position="174"/>
        <end position="212"/>
    </location>
</feature>
<feature type="region of interest" description="Disordered" evidence="5">
    <location>
        <begin position="1"/>
        <end position="30"/>
    </location>
</feature>
<feature type="region of interest" description="Disordered" evidence="5">
    <location>
        <begin position="53"/>
        <end position="74"/>
    </location>
</feature>
<feature type="region of interest" description="Required for interaction with DRG1" evidence="1">
    <location>
        <begin position="236"/>
        <end position="260"/>
    </location>
</feature>
<feature type="region of interest" description="Disordered" evidence="5">
    <location>
        <begin position="302"/>
        <end position="326"/>
    </location>
</feature>
<feature type="region of interest" description="Disordered" evidence="5">
    <location>
        <begin position="359"/>
        <end position="426"/>
    </location>
</feature>
<feature type="coiled-coil region" evidence="3">
    <location>
        <begin position="61"/>
        <end position="86"/>
    </location>
</feature>
<feature type="coiled-coil region" evidence="3">
    <location>
        <begin position="218"/>
        <end position="285"/>
    </location>
</feature>
<feature type="compositionally biased region" description="Low complexity" evidence="5">
    <location>
        <begin position="1"/>
        <end position="12"/>
    </location>
</feature>
<feature type="compositionally biased region" description="Basic and acidic residues" evidence="5">
    <location>
        <begin position="13"/>
        <end position="29"/>
    </location>
</feature>
<feature type="compositionally biased region" description="Polar residues" evidence="5">
    <location>
        <begin position="53"/>
        <end position="62"/>
    </location>
</feature>
<feature type="compositionally biased region" description="Basic and acidic residues" evidence="5">
    <location>
        <begin position="64"/>
        <end position="74"/>
    </location>
</feature>
<feature type="compositionally biased region" description="Acidic residues" evidence="5">
    <location>
        <begin position="410"/>
        <end position="426"/>
    </location>
</feature>
<feature type="modified residue" description="Phosphoserine" evidence="8">
    <location>
        <position position="231"/>
    </location>
</feature>
<feature type="modified residue" description="Phosphoserine" evidence="2">
    <location>
        <position position="351"/>
    </location>
</feature>
<feature type="modified residue" description="Phosphoserine" evidence="2">
    <location>
        <position position="360"/>
    </location>
</feature>
<feature type="modified residue" description="Phosphoserine" evidence="2">
    <location>
        <position position="381"/>
    </location>
</feature>
<dbReference type="EMBL" id="BC088438">
    <property type="protein sequence ID" value="AAH88438.1"/>
    <property type="molecule type" value="mRNA"/>
</dbReference>
<dbReference type="EMBL" id="AY377983">
    <property type="protein sequence ID" value="AAR24540.1"/>
    <property type="molecule type" value="mRNA"/>
</dbReference>
<dbReference type="RefSeq" id="NP_001010963.1">
    <property type="nucleotide sequence ID" value="NM_001010963.1"/>
</dbReference>
<dbReference type="SMR" id="Q6U6G5"/>
<dbReference type="FunCoup" id="Q6U6G5">
    <property type="interactions" value="4589"/>
</dbReference>
<dbReference type="STRING" id="10116.ENSRNOP00000007276"/>
<dbReference type="iPTMnet" id="Q6U6G5"/>
<dbReference type="PhosphoSitePlus" id="Q6U6G5"/>
<dbReference type="jPOST" id="Q6U6G5"/>
<dbReference type="PaxDb" id="10116-ENSRNOP00000007276"/>
<dbReference type="Ensembl" id="ENSRNOT00000007276.6">
    <property type="protein sequence ID" value="ENSRNOP00000007276.4"/>
    <property type="gene ID" value="ENSRNOG00000005256.6"/>
</dbReference>
<dbReference type="GeneID" id="362154"/>
<dbReference type="KEGG" id="rno:362154"/>
<dbReference type="UCSC" id="RGD:1359234">
    <property type="organism name" value="rat"/>
</dbReference>
<dbReference type="AGR" id="RGD:1359234"/>
<dbReference type="CTD" id="55854"/>
<dbReference type="RGD" id="1359234">
    <property type="gene designation" value="Zc3h15"/>
</dbReference>
<dbReference type="eggNOG" id="KOG1763">
    <property type="taxonomic scope" value="Eukaryota"/>
</dbReference>
<dbReference type="GeneTree" id="ENSGT00390000015818"/>
<dbReference type="HOGENOM" id="CLU_042870_3_0_1"/>
<dbReference type="InParanoid" id="Q6U6G5"/>
<dbReference type="OMA" id="GREMFYF"/>
<dbReference type="OrthoDB" id="278280at2759"/>
<dbReference type="PhylomeDB" id="Q6U6G5"/>
<dbReference type="TreeFam" id="TF300892"/>
<dbReference type="Reactome" id="R-RNO-9629569">
    <property type="pathway name" value="Protein hydroxylation"/>
</dbReference>
<dbReference type="PRO" id="PR:Q6U6G5"/>
<dbReference type="Proteomes" id="UP000002494">
    <property type="component" value="Chromosome 3"/>
</dbReference>
<dbReference type="Bgee" id="ENSRNOG00000005256">
    <property type="expression patterns" value="Expressed in testis and 19 other cell types or tissues"/>
</dbReference>
<dbReference type="GO" id="GO:0005829">
    <property type="term" value="C:cytosol"/>
    <property type="evidence" value="ECO:0000318"/>
    <property type="project" value="GO_Central"/>
</dbReference>
<dbReference type="GO" id="GO:0005634">
    <property type="term" value="C:nucleus"/>
    <property type="evidence" value="ECO:0007669"/>
    <property type="project" value="UniProtKB-SubCell"/>
</dbReference>
<dbReference type="GO" id="GO:0008270">
    <property type="term" value="F:zinc ion binding"/>
    <property type="evidence" value="ECO:0007669"/>
    <property type="project" value="UniProtKB-KW"/>
</dbReference>
<dbReference type="GO" id="GO:0019221">
    <property type="term" value="P:cytokine-mediated signaling pathway"/>
    <property type="evidence" value="ECO:0000266"/>
    <property type="project" value="RGD"/>
</dbReference>
<dbReference type="GO" id="GO:0002181">
    <property type="term" value="P:cytoplasmic translation"/>
    <property type="evidence" value="ECO:0000318"/>
    <property type="project" value="GO_Central"/>
</dbReference>
<dbReference type="FunFam" id="4.10.1000.10:FF:000050">
    <property type="entry name" value="AGAP008634-PA"/>
    <property type="match status" value="1"/>
</dbReference>
<dbReference type="Gene3D" id="6.20.400.10">
    <property type="match status" value="1"/>
</dbReference>
<dbReference type="Gene3D" id="4.10.1000.10">
    <property type="entry name" value="Zinc finger, CCCH-type"/>
    <property type="match status" value="1"/>
</dbReference>
<dbReference type="InterPro" id="IPR032378">
    <property type="entry name" value="ZC3H15/TMA46_C"/>
</dbReference>
<dbReference type="InterPro" id="IPR000571">
    <property type="entry name" value="Znf_CCCH"/>
</dbReference>
<dbReference type="InterPro" id="IPR036855">
    <property type="entry name" value="Znf_CCCH_sf"/>
</dbReference>
<dbReference type="PANTHER" id="PTHR12681:SF0">
    <property type="entry name" value="ZINC FINGER CCCH DOMAIN-CONTAINING PROTEIN 15"/>
    <property type="match status" value="1"/>
</dbReference>
<dbReference type="PANTHER" id="PTHR12681">
    <property type="entry name" value="ZINC FINGER-CONTAINING PROTEIN P48ZNF"/>
    <property type="match status" value="1"/>
</dbReference>
<dbReference type="Pfam" id="PF16543">
    <property type="entry name" value="DFRP_C"/>
    <property type="match status" value="1"/>
</dbReference>
<dbReference type="Pfam" id="PF00642">
    <property type="entry name" value="zf-CCCH"/>
    <property type="match status" value="1"/>
</dbReference>
<dbReference type="SMART" id="SM00356">
    <property type="entry name" value="ZnF_C3H1"/>
    <property type="match status" value="2"/>
</dbReference>
<dbReference type="SUPFAM" id="SSF90229">
    <property type="entry name" value="CCCH zinc finger"/>
    <property type="match status" value="1"/>
</dbReference>
<dbReference type="PROSITE" id="PS50103">
    <property type="entry name" value="ZF_C3H1"/>
    <property type="match status" value="2"/>
</dbReference>
<gene>
    <name type="primary">Zc3h15</name>
</gene>
<organism>
    <name type="scientific">Rattus norvegicus</name>
    <name type="common">Rat</name>
    <dbReference type="NCBI Taxonomy" id="10116"/>
    <lineage>
        <taxon>Eukaryota</taxon>
        <taxon>Metazoa</taxon>
        <taxon>Chordata</taxon>
        <taxon>Craniata</taxon>
        <taxon>Vertebrata</taxon>
        <taxon>Euteleostomi</taxon>
        <taxon>Mammalia</taxon>
        <taxon>Eutheria</taxon>
        <taxon>Euarchontoglires</taxon>
        <taxon>Glires</taxon>
        <taxon>Rodentia</taxon>
        <taxon>Myomorpha</taxon>
        <taxon>Muroidea</taxon>
        <taxon>Muridae</taxon>
        <taxon>Murinae</taxon>
        <taxon>Rattus</taxon>
    </lineage>
</organism>
<evidence type="ECO:0000250" key="1"/>
<evidence type="ECO:0000250" key="2">
    <source>
        <dbReference type="UniProtKB" id="Q8WU90"/>
    </source>
</evidence>
<evidence type="ECO:0000255" key="3"/>
<evidence type="ECO:0000255" key="4">
    <source>
        <dbReference type="PROSITE-ProRule" id="PRU00723"/>
    </source>
</evidence>
<evidence type="ECO:0000256" key="5">
    <source>
        <dbReference type="SAM" id="MobiDB-lite"/>
    </source>
</evidence>
<evidence type="ECO:0000269" key="6">
    <source>
    </source>
</evidence>
<evidence type="ECO:0000305" key="7"/>
<evidence type="ECO:0007744" key="8">
    <source>
    </source>
</evidence>
<protein>
    <recommendedName>
        <fullName>Zinc finger CCCH domain-containing protein 15</fullName>
    </recommendedName>
    <alternativeName>
        <fullName>p48ZnF</fullName>
    </alternativeName>
</protein>
<sequence length="426" mass="48299">MPPKKQAQAGGSKKAEQKKKEKIIEDKTFGLKNKKGAKQQKFIKAVTHQVKFGQQNPRQVAQSEAEKKLKKDDKKKELQELNELFKPVVAAQKISKGADPKSVVCAFFKQGQCTKGDKCKFSHDLTLERKCEKRSVYIDARDEELEKDTMDNWDEKKLEEVVNKKHGEAEKKKPKTQIVCRHFLEAIENNKYGWFWVCPGGGDNCMYRHALPPGFVLKKDKKKEEKEDEISLEDLIERERSALGPNVTKITLESFLAWKKRKRQEKIDKLEQDMERRKADFKAGKALVISGREVFEFRPELVNDDDEEADDTRYIQGTGGDEVDDSVGVNDIDLSLYVPRDVEETGITVASLERFSTYASDKDENKLSEASGGLAENGERSDLDEDSGGGGQENGSIDAVPVDENLFTGEDLDELEEELNTLDLEE</sequence>
<reference key="1">
    <citation type="journal article" date="2004" name="Exp. Mol. Med.">
        <title>Nerve growth factor (NGF) induces mRNA expression of the new transcription factor protein p48ZnF.</title>
        <authorList>
            <person name="Heese K."/>
            <person name="Nagai Y."/>
            <person name="Sawada T."/>
        </authorList>
    </citation>
    <scope>NUCLEOTIDE SEQUENCE [MRNA]</scope>
    <scope>TISSUE SPECIFICITY</scope>
    <scope>SUBCELLULAR LOCATION</scope>
    <scope>INDUCTION BY NGF</scope>
    <source>
        <tissue>Brain</tissue>
    </source>
</reference>
<reference key="2">
    <citation type="journal article" date="2004" name="Genome Res.">
        <title>The status, quality, and expansion of the NIH full-length cDNA project: the Mammalian Gene Collection (MGC).</title>
        <authorList>
            <consortium name="The MGC Project Team"/>
        </authorList>
    </citation>
    <scope>NUCLEOTIDE SEQUENCE [LARGE SCALE MRNA]</scope>
    <source>
        <tissue>Kidney</tissue>
    </source>
</reference>
<reference key="3">
    <citation type="journal article" date="2012" name="Nat. Commun.">
        <title>Quantitative maps of protein phosphorylation sites across 14 different rat organs and tissues.</title>
        <authorList>
            <person name="Lundby A."/>
            <person name="Secher A."/>
            <person name="Lage K."/>
            <person name="Nordsborg N.B."/>
            <person name="Dmytriyev A."/>
            <person name="Lundby C."/>
            <person name="Olsen J.V."/>
        </authorList>
    </citation>
    <scope>PHOSPHORYLATION [LARGE SCALE ANALYSIS] AT SER-231</scope>
    <scope>IDENTIFICATION BY MASS SPECTROMETRY [LARGE SCALE ANALYSIS]</scope>
</reference>
<name>ZC3HF_RAT</name>